<proteinExistence type="evidence at protein level"/>
<reference key="1">
    <citation type="journal article" date="2005" name="Science">
        <title>The transcriptional landscape of the mammalian genome.</title>
        <authorList>
            <person name="Carninci P."/>
            <person name="Kasukawa T."/>
            <person name="Katayama S."/>
            <person name="Gough J."/>
            <person name="Frith M.C."/>
            <person name="Maeda N."/>
            <person name="Oyama R."/>
            <person name="Ravasi T."/>
            <person name="Lenhard B."/>
            <person name="Wells C."/>
            <person name="Kodzius R."/>
            <person name="Shimokawa K."/>
            <person name="Bajic V.B."/>
            <person name="Brenner S.E."/>
            <person name="Batalov S."/>
            <person name="Forrest A.R."/>
            <person name="Zavolan M."/>
            <person name="Davis M.J."/>
            <person name="Wilming L.G."/>
            <person name="Aidinis V."/>
            <person name="Allen J.E."/>
            <person name="Ambesi-Impiombato A."/>
            <person name="Apweiler R."/>
            <person name="Aturaliya R.N."/>
            <person name="Bailey T.L."/>
            <person name="Bansal M."/>
            <person name="Baxter L."/>
            <person name="Beisel K.W."/>
            <person name="Bersano T."/>
            <person name="Bono H."/>
            <person name="Chalk A.M."/>
            <person name="Chiu K.P."/>
            <person name="Choudhary V."/>
            <person name="Christoffels A."/>
            <person name="Clutterbuck D.R."/>
            <person name="Crowe M.L."/>
            <person name="Dalla E."/>
            <person name="Dalrymple B.P."/>
            <person name="de Bono B."/>
            <person name="Della Gatta G."/>
            <person name="di Bernardo D."/>
            <person name="Down T."/>
            <person name="Engstrom P."/>
            <person name="Fagiolini M."/>
            <person name="Faulkner G."/>
            <person name="Fletcher C.F."/>
            <person name="Fukushima T."/>
            <person name="Furuno M."/>
            <person name="Futaki S."/>
            <person name="Gariboldi M."/>
            <person name="Georgii-Hemming P."/>
            <person name="Gingeras T.R."/>
            <person name="Gojobori T."/>
            <person name="Green R.E."/>
            <person name="Gustincich S."/>
            <person name="Harbers M."/>
            <person name="Hayashi Y."/>
            <person name="Hensch T.K."/>
            <person name="Hirokawa N."/>
            <person name="Hill D."/>
            <person name="Huminiecki L."/>
            <person name="Iacono M."/>
            <person name="Ikeo K."/>
            <person name="Iwama A."/>
            <person name="Ishikawa T."/>
            <person name="Jakt M."/>
            <person name="Kanapin A."/>
            <person name="Katoh M."/>
            <person name="Kawasawa Y."/>
            <person name="Kelso J."/>
            <person name="Kitamura H."/>
            <person name="Kitano H."/>
            <person name="Kollias G."/>
            <person name="Krishnan S.P."/>
            <person name="Kruger A."/>
            <person name="Kummerfeld S.K."/>
            <person name="Kurochkin I.V."/>
            <person name="Lareau L.F."/>
            <person name="Lazarevic D."/>
            <person name="Lipovich L."/>
            <person name="Liu J."/>
            <person name="Liuni S."/>
            <person name="McWilliam S."/>
            <person name="Madan Babu M."/>
            <person name="Madera M."/>
            <person name="Marchionni L."/>
            <person name="Matsuda H."/>
            <person name="Matsuzawa S."/>
            <person name="Miki H."/>
            <person name="Mignone F."/>
            <person name="Miyake S."/>
            <person name="Morris K."/>
            <person name="Mottagui-Tabar S."/>
            <person name="Mulder N."/>
            <person name="Nakano N."/>
            <person name="Nakauchi H."/>
            <person name="Ng P."/>
            <person name="Nilsson R."/>
            <person name="Nishiguchi S."/>
            <person name="Nishikawa S."/>
            <person name="Nori F."/>
            <person name="Ohara O."/>
            <person name="Okazaki Y."/>
            <person name="Orlando V."/>
            <person name="Pang K.C."/>
            <person name="Pavan W.J."/>
            <person name="Pavesi G."/>
            <person name="Pesole G."/>
            <person name="Petrovsky N."/>
            <person name="Piazza S."/>
            <person name="Reed J."/>
            <person name="Reid J.F."/>
            <person name="Ring B.Z."/>
            <person name="Ringwald M."/>
            <person name="Rost B."/>
            <person name="Ruan Y."/>
            <person name="Salzberg S.L."/>
            <person name="Sandelin A."/>
            <person name="Schneider C."/>
            <person name="Schoenbach C."/>
            <person name="Sekiguchi K."/>
            <person name="Semple C.A."/>
            <person name="Seno S."/>
            <person name="Sessa L."/>
            <person name="Sheng Y."/>
            <person name="Shibata Y."/>
            <person name="Shimada H."/>
            <person name="Shimada K."/>
            <person name="Silva D."/>
            <person name="Sinclair B."/>
            <person name="Sperling S."/>
            <person name="Stupka E."/>
            <person name="Sugiura K."/>
            <person name="Sultana R."/>
            <person name="Takenaka Y."/>
            <person name="Taki K."/>
            <person name="Tammoja K."/>
            <person name="Tan S.L."/>
            <person name="Tang S."/>
            <person name="Taylor M.S."/>
            <person name="Tegner J."/>
            <person name="Teichmann S.A."/>
            <person name="Ueda H.R."/>
            <person name="van Nimwegen E."/>
            <person name="Verardo R."/>
            <person name="Wei C.L."/>
            <person name="Yagi K."/>
            <person name="Yamanishi H."/>
            <person name="Zabarovsky E."/>
            <person name="Zhu S."/>
            <person name="Zimmer A."/>
            <person name="Hide W."/>
            <person name="Bult C."/>
            <person name="Grimmond S.M."/>
            <person name="Teasdale R.D."/>
            <person name="Liu E.T."/>
            <person name="Brusic V."/>
            <person name="Quackenbush J."/>
            <person name="Wahlestedt C."/>
            <person name="Mattick J.S."/>
            <person name="Hume D.A."/>
            <person name="Kai C."/>
            <person name="Sasaki D."/>
            <person name="Tomaru Y."/>
            <person name="Fukuda S."/>
            <person name="Kanamori-Katayama M."/>
            <person name="Suzuki M."/>
            <person name="Aoki J."/>
            <person name="Arakawa T."/>
            <person name="Iida J."/>
            <person name="Imamura K."/>
            <person name="Itoh M."/>
            <person name="Kato T."/>
            <person name="Kawaji H."/>
            <person name="Kawagashira N."/>
            <person name="Kawashima T."/>
            <person name="Kojima M."/>
            <person name="Kondo S."/>
            <person name="Konno H."/>
            <person name="Nakano K."/>
            <person name="Ninomiya N."/>
            <person name="Nishio T."/>
            <person name="Okada M."/>
            <person name="Plessy C."/>
            <person name="Shibata K."/>
            <person name="Shiraki T."/>
            <person name="Suzuki S."/>
            <person name="Tagami M."/>
            <person name="Waki K."/>
            <person name="Watahiki A."/>
            <person name="Okamura-Oho Y."/>
            <person name="Suzuki H."/>
            <person name="Kawai J."/>
            <person name="Hayashizaki Y."/>
        </authorList>
    </citation>
    <scope>NUCLEOTIDE SEQUENCE [LARGE SCALE MRNA]</scope>
    <source>
        <strain>C57BL/6J</strain>
        <tissue>Medulla oblongata</tissue>
    </source>
</reference>
<reference key="2">
    <citation type="journal article" date="2004" name="Genome Res.">
        <title>The status, quality, and expansion of the NIH full-length cDNA project: the Mammalian Gene Collection (MGC).</title>
        <authorList>
            <consortium name="The MGC Project Team"/>
        </authorList>
    </citation>
    <scope>NUCLEOTIDE SEQUENCE [LARGE SCALE MRNA]</scope>
    <source>
        <tissue>Eye</tissue>
    </source>
</reference>
<reference key="3">
    <citation type="journal article" date="2003" name="Mol. Cell. Neurosci.">
        <title>Regulation of cpg15 by signaling pathways that mediate synaptic plasticity.</title>
        <authorList>
            <person name="Fujino T."/>
            <person name="Lee W.-C.A."/>
            <person name="Nedivi E."/>
        </authorList>
    </citation>
    <scope>NUCLEOTIDE SEQUENCE [GENOMIC DNA] OF 1-18</scope>
    <scope>INDUCTION</scope>
    <source>
        <strain>C57BL/6J</strain>
    </source>
</reference>
<reference key="4">
    <citation type="journal article" date="2006" name="Mol. Cell. Proteomics">
        <title>Comprehensive identification of phosphorylation sites in postsynaptic density preparations.</title>
        <authorList>
            <person name="Trinidad J.C."/>
            <person name="Specht C.G."/>
            <person name="Thalhammer A."/>
            <person name="Schoepfer R."/>
            <person name="Burlingame A.L."/>
        </authorList>
    </citation>
    <scope>IDENTIFICATION BY MASS SPECTROMETRY [LARGE SCALE ANALYSIS]</scope>
    <source>
        <tissue>Brain</tissue>
    </source>
</reference>
<reference key="5">
    <citation type="journal article" date="2010" name="Cell">
        <title>A tissue-specific atlas of mouse protein phosphorylation and expression.</title>
        <authorList>
            <person name="Huttlin E.L."/>
            <person name="Jedrychowski M.P."/>
            <person name="Elias J.E."/>
            <person name="Goswami T."/>
            <person name="Rad R."/>
            <person name="Beausoleil S.A."/>
            <person name="Villen J."/>
            <person name="Haas W."/>
            <person name="Sowa M.E."/>
            <person name="Gygi S.P."/>
        </authorList>
    </citation>
    <scope>IDENTIFICATION BY MASS SPECTROMETRY [LARGE SCALE ANALYSIS]</scope>
    <source>
        <tissue>Brain</tissue>
    </source>
</reference>
<reference key="6">
    <citation type="journal article" date="2012" name="Neuron">
        <title>High-resolution proteomics unravel architecture and molecular diversity of native AMPA receptor complexes.</title>
        <authorList>
            <person name="Schwenk J."/>
            <person name="Harmel N."/>
            <person name="Brechet A."/>
            <person name="Zolles G."/>
            <person name="Berkefeld H."/>
            <person name="Muller C.S."/>
            <person name="Bildl W."/>
            <person name="Baehrens D."/>
            <person name="Huber B."/>
            <person name="Kulik A."/>
            <person name="Klocker N."/>
            <person name="Schulte U."/>
            <person name="Fakler B."/>
        </authorList>
    </citation>
    <scope>IDENTIFICATION IN AMPAR COMPLEX</scope>
    <scope>SUBCELLULAR LOCATION</scope>
    <scope>TISSUE SPECIFICITY</scope>
</reference>
<gene>
    <name type="primary">Nrn1</name>
    <name type="synonym">Cpg15</name>
</gene>
<dbReference type="EMBL" id="AK161859">
    <property type="protein sequence ID" value="BAE36610.1"/>
    <property type="molecule type" value="mRNA"/>
</dbReference>
<dbReference type="EMBL" id="BC035531">
    <property type="protein sequence ID" value="AAH35531.1"/>
    <property type="molecule type" value="mRNA"/>
</dbReference>
<dbReference type="EMBL" id="AY150584">
    <property type="protein sequence ID" value="AAN84528.1"/>
    <property type="molecule type" value="Genomic_DNA"/>
</dbReference>
<dbReference type="CCDS" id="CCDS26455.1"/>
<dbReference type="RefSeq" id="NP_705757.1">
    <property type="nucleotide sequence ID" value="NM_153529.2"/>
</dbReference>
<dbReference type="FunCoup" id="Q8CFV4">
    <property type="interactions" value="163"/>
</dbReference>
<dbReference type="IntAct" id="Q8CFV4">
    <property type="interactions" value="2"/>
</dbReference>
<dbReference type="MINT" id="Q8CFV4"/>
<dbReference type="STRING" id="10090.ENSMUSP00000040900"/>
<dbReference type="iPTMnet" id="Q8CFV4"/>
<dbReference type="PhosphoSitePlus" id="Q8CFV4"/>
<dbReference type="SwissPalm" id="Q8CFV4"/>
<dbReference type="PaxDb" id="10090-ENSMUSP00000040900"/>
<dbReference type="ProteomicsDB" id="293738"/>
<dbReference type="Pumba" id="Q8CFV4"/>
<dbReference type="Antibodypedia" id="24561">
    <property type="antibodies" value="189 antibodies from 31 providers"/>
</dbReference>
<dbReference type="DNASU" id="68404"/>
<dbReference type="Ensembl" id="ENSMUST00000037623.15">
    <property type="protein sequence ID" value="ENSMUSP00000040900.9"/>
    <property type="gene ID" value="ENSMUSG00000039114.17"/>
</dbReference>
<dbReference type="GeneID" id="68404"/>
<dbReference type="KEGG" id="mmu:68404"/>
<dbReference type="UCSC" id="uc007qcm.3">
    <property type="organism name" value="mouse"/>
</dbReference>
<dbReference type="AGR" id="MGI:1915654"/>
<dbReference type="CTD" id="51299"/>
<dbReference type="MGI" id="MGI:1915654">
    <property type="gene designation" value="Nrn1"/>
</dbReference>
<dbReference type="VEuPathDB" id="HostDB:ENSMUSG00000039114"/>
<dbReference type="eggNOG" id="ENOG502RZNR">
    <property type="taxonomic scope" value="Eukaryota"/>
</dbReference>
<dbReference type="GeneTree" id="ENSGT00530000063853"/>
<dbReference type="HOGENOM" id="CLU_135101_0_0_1"/>
<dbReference type="InParanoid" id="Q8CFV4"/>
<dbReference type="OMA" id="CAYWEDF"/>
<dbReference type="PhylomeDB" id="Q8CFV4"/>
<dbReference type="TreeFam" id="TF332589"/>
<dbReference type="Reactome" id="R-MMU-163125">
    <property type="pathway name" value="Post-translational modification: synthesis of GPI-anchored proteins"/>
</dbReference>
<dbReference type="BioGRID-ORCS" id="68404">
    <property type="hits" value="4 hits in 76 CRISPR screens"/>
</dbReference>
<dbReference type="CD-CODE" id="CE726F99">
    <property type="entry name" value="Postsynaptic density"/>
</dbReference>
<dbReference type="ChiTaRS" id="Nrn1">
    <property type="organism name" value="mouse"/>
</dbReference>
<dbReference type="PRO" id="PR:Q8CFV4"/>
<dbReference type="Proteomes" id="UP000000589">
    <property type="component" value="Chromosome 13"/>
</dbReference>
<dbReference type="RNAct" id="Q8CFV4">
    <property type="molecule type" value="protein"/>
</dbReference>
<dbReference type="Bgee" id="ENSMUSG00000039114">
    <property type="expression patterns" value="Expressed in habenula and 180 other cell types or tissues"/>
</dbReference>
<dbReference type="ExpressionAtlas" id="Q8CFV4">
    <property type="expression patterns" value="baseline and differential"/>
</dbReference>
<dbReference type="GO" id="GO:0032281">
    <property type="term" value="C:AMPA glutamate receptor complex"/>
    <property type="evidence" value="ECO:0000314"/>
    <property type="project" value="MGI"/>
</dbReference>
<dbReference type="GO" id="GO:0005615">
    <property type="term" value="C:extracellular space"/>
    <property type="evidence" value="ECO:0000314"/>
    <property type="project" value="MGI"/>
</dbReference>
<dbReference type="GO" id="GO:0098978">
    <property type="term" value="C:glutamatergic synapse"/>
    <property type="evidence" value="ECO:0000314"/>
    <property type="project" value="SynGO"/>
</dbReference>
<dbReference type="GO" id="GO:0005886">
    <property type="term" value="C:plasma membrane"/>
    <property type="evidence" value="ECO:0000314"/>
    <property type="project" value="MGI"/>
</dbReference>
<dbReference type="GO" id="GO:0098793">
    <property type="term" value="C:presynapse"/>
    <property type="evidence" value="ECO:0007669"/>
    <property type="project" value="GOC"/>
</dbReference>
<dbReference type="GO" id="GO:0098552">
    <property type="term" value="C:side of membrane"/>
    <property type="evidence" value="ECO:0007669"/>
    <property type="project" value="UniProtKB-KW"/>
</dbReference>
<dbReference type="GO" id="GO:0042802">
    <property type="term" value="F:identical protein binding"/>
    <property type="evidence" value="ECO:0000353"/>
    <property type="project" value="MGI"/>
</dbReference>
<dbReference type="GO" id="GO:0007409">
    <property type="term" value="P:axonogenesis"/>
    <property type="evidence" value="ECO:0000266"/>
    <property type="project" value="MGI"/>
</dbReference>
<dbReference type="GO" id="GO:1990138">
    <property type="term" value="P:neuron projection extension"/>
    <property type="evidence" value="ECO:0000314"/>
    <property type="project" value="MGI"/>
</dbReference>
<dbReference type="GO" id="GO:0099171">
    <property type="term" value="P:presynaptic modulation of chemical synaptic transmission"/>
    <property type="evidence" value="ECO:0000314"/>
    <property type="project" value="SynGO"/>
</dbReference>
<dbReference type="GO" id="GO:0090128">
    <property type="term" value="P:regulation of synapse maturation"/>
    <property type="evidence" value="ECO:0000314"/>
    <property type="project" value="SynGO"/>
</dbReference>
<dbReference type="InterPro" id="IPR026144">
    <property type="entry name" value="Neuritin_fam"/>
</dbReference>
<dbReference type="PANTHER" id="PTHR15902:SF1">
    <property type="entry name" value="NEURITIN"/>
    <property type="match status" value="1"/>
</dbReference>
<dbReference type="PANTHER" id="PTHR15902">
    <property type="entry name" value="NEURITIN-RELATED"/>
    <property type="match status" value="1"/>
</dbReference>
<dbReference type="Pfam" id="PF15056">
    <property type="entry name" value="NRN1"/>
    <property type="match status" value="1"/>
</dbReference>
<feature type="signal peptide" evidence="2">
    <location>
        <begin position="1"/>
        <end position="27"/>
    </location>
</feature>
<feature type="chain" id="PRO_0000262514" description="Neuritin">
    <location>
        <begin position="28"/>
        <end position="116"/>
    </location>
</feature>
<feature type="propeptide" id="PRO_0000262515" description="Removed in mature form" evidence="2">
    <location>
        <begin position="117"/>
        <end position="142"/>
    </location>
</feature>
<feature type="lipid moiety-binding region" description="GPI-anchor amidated glycine" evidence="2">
    <location>
        <position position="116"/>
    </location>
</feature>
<organism>
    <name type="scientific">Mus musculus</name>
    <name type="common">Mouse</name>
    <dbReference type="NCBI Taxonomy" id="10090"/>
    <lineage>
        <taxon>Eukaryota</taxon>
        <taxon>Metazoa</taxon>
        <taxon>Chordata</taxon>
        <taxon>Craniata</taxon>
        <taxon>Vertebrata</taxon>
        <taxon>Euteleostomi</taxon>
        <taxon>Mammalia</taxon>
        <taxon>Eutheria</taxon>
        <taxon>Euarchontoglires</taxon>
        <taxon>Glires</taxon>
        <taxon>Rodentia</taxon>
        <taxon>Myomorpha</taxon>
        <taxon>Muroidea</taxon>
        <taxon>Muridae</taxon>
        <taxon>Murinae</taxon>
        <taxon>Mus</taxon>
        <taxon>Mus</taxon>
    </lineage>
</organism>
<protein>
    <recommendedName>
        <fullName>Neuritin</fullName>
    </recommendedName>
    <alternativeName>
        <fullName>Candidate plasticity gene 15 protein</fullName>
    </alternativeName>
</protein>
<sequence length="142" mass="15353">MGLKLNGRYISLILAVQIAYLVQAVRAAGKCDAVFKGFSDCLLKLGDSMANYPQGLDDKTNIKTVCTYWEDFHSCTVTALTDCQEGAKDMWDKLRKESKNLNIQGSLFELCGSSNGAAGSLLPALSVLLVSLSAALATWFSF</sequence>
<comment type="function">
    <text evidence="1">Promotes neurite outgrowth and especially branching of neuritic processes in primary hippocampal and cortical cells.</text>
</comment>
<comment type="subunit">
    <text evidence="4">Component of the outer core of AMPAR complex. AMPAR complex consists of an inner core made of 4 pore-forming GluA/GRIA proteins (GRIA1, GRIA2, GRIA3 and GRIA4) and 4 major auxiliary subunits arranged in a twofold symmetry. One of the two pairs of distinct binding sites is occupied either by CNIH2, CNIH3 or CACNG2, CACNG3. The other harbors CACNG2, CACNG3, CACNG4, CACNG8 or GSG1L. This inner core of AMPAR complex is complemented by outer core constituents binding directly to the GluA/GRIA proteins at sites distinct from the interaction sites of the inner core constituents. Outer core constituents include at least PRRT1, PRRT2, CKAMP44/SHISA9, FRRS1L and NRN1. The proteins of the inner and outer core serve as a platform for other, more peripherally associated AMPAR constituents. Alone or in combination, these auxiliary subunits control the gating and pharmacology of the AMPAR complex and profoundly impact their biogenesis and protein processing.</text>
</comment>
<comment type="subcellular location">
    <subcellularLocation>
        <location evidence="5">Cell membrane</location>
        <topology evidence="5">Lipid-anchor</topology>
        <topology evidence="5">GPI-anchor</topology>
    </subcellularLocation>
    <subcellularLocation>
        <location evidence="6">Synapse</location>
    </subcellularLocation>
</comment>
<comment type="tissue specificity">
    <text evidence="4">Expressed in the brain (at protein level).</text>
</comment>
<comment type="induction">
    <text evidence="3">By synaptic activity through NMDA receptors and L-type voltage-sensitive calcium channels. By cAMP in active neurons.</text>
</comment>
<comment type="similarity">
    <text evidence="5">Belongs to the neuritin family.</text>
</comment>
<keyword id="KW-1003">Cell membrane</keyword>
<keyword id="KW-0325">Glycoprotein</keyword>
<keyword id="KW-0336">GPI-anchor</keyword>
<keyword id="KW-0449">Lipoprotein</keyword>
<keyword id="KW-0472">Membrane</keyword>
<keyword id="KW-1185">Reference proteome</keyword>
<keyword id="KW-0732">Signal</keyword>
<keyword id="KW-0770">Synapse</keyword>
<accession>Q8CFV4</accession>
<accession>Q7TSR9</accession>
<name>NRN1_MOUSE</name>
<evidence type="ECO:0000250" key="1"/>
<evidence type="ECO:0000255" key="2"/>
<evidence type="ECO:0000269" key="3">
    <source>
    </source>
</evidence>
<evidence type="ECO:0000269" key="4">
    <source>
    </source>
</evidence>
<evidence type="ECO:0000305" key="5"/>
<evidence type="ECO:0000305" key="6">
    <source>
    </source>
</evidence>